<proteinExistence type="inferred from homology"/>
<keyword id="KW-0687">Ribonucleoprotein</keyword>
<keyword id="KW-0689">Ribosomal protein</keyword>
<keyword id="KW-0694">RNA-binding</keyword>
<keyword id="KW-0699">rRNA-binding</keyword>
<comment type="function">
    <text evidence="1">This protein binds to 23S rRNA in the presence of protein L20.</text>
</comment>
<comment type="subunit">
    <text evidence="1">Part of the 50S ribosomal subunit. Contacts protein L20.</text>
</comment>
<comment type="similarity">
    <text evidence="1">Belongs to the bacterial ribosomal protein bL21 family.</text>
</comment>
<sequence length="104" mass="11155">MSTYAIIKTGGKQVKVEVGQAIYVEKIDAEAGAEVTFNEVVLVGGDKTVVGTPVVEGATVVGTVEKQGKQKKVVTFKYKPKKGSHRKQGHRQPYTKVVINAINA</sequence>
<feature type="chain" id="PRO_0000269397" description="Large ribosomal subunit protein bL21">
    <location>
        <begin position="1"/>
        <end position="104"/>
    </location>
</feature>
<dbReference type="EMBL" id="CP000260">
    <property type="protein sequence ID" value="ABF33754.1"/>
    <property type="molecule type" value="Genomic_DNA"/>
</dbReference>
<dbReference type="RefSeq" id="WP_002985116.1">
    <property type="nucleotide sequence ID" value="NZ_CVUH01000002.1"/>
</dbReference>
<dbReference type="SMR" id="Q1JHI2"/>
<dbReference type="GeneID" id="83690429"/>
<dbReference type="KEGG" id="sph:MGAS10270_Spy0689"/>
<dbReference type="HOGENOM" id="CLU_061463_3_1_9"/>
<dbReference type="Proteomes" id="UP000002436">
    <property type="component" value="Chromosome"/>
</dbReference>
<dbReference type="GO" id="GO:0005737">
    <property type="term" value="C:cytoplasm"/>
    <property type="evidence" value="ECO:0007669"/>
    <property type="project" value="UniProtKB-ARBA"/>
</dbReference>
<dbReference type="GO" id="GO:1990904">
    <property type="term" value="C:ribonucleoprotein complex"/>
    <property type="evidence" value="ECO:0007669"/>
    <property type="project" value="UniProtKB-KW"/>
</dbReference>
<dbReference type="GO" id="GO:0005840">
    <property type="term" value="C:ribosome"/>
    <property type="evidence" value="ECO:0007669"/>
    <property type="project" value="UniProtKB-KW"/>
</dbReference>
<dbReference type="GO" id="GO:0019843">
    <property type="term" value="F:rRNA binding"/>
    <property type="evidence" value="ECO:0007669"/>
    <property type="project" value="UniProtKB-UniRule"/>
</dbReference>
<dbReference type="GO" id="GO:0003735">
    <property type="term" value="F:structural constituent of ribosome"/>
    <property type="evidence" value="ECO:0007669"/>
    <property type="project" value="InterPro"/>
</dbReference>
<dbReference type="GO" id="GO:0006412">
    <property type="term" value="P:translation"/>
    <property type="evidence" value="ECO:0007669"/>
    <property type="project" value="UniProtKB-UniRule"/>
</dbReference>
<dbReference type="HAMAP" id="MF_01363">
    <property type="entry name" value="Ribosomal_bL21"/>
    <property type="match status" value="1"/>
</dbReference>
<dbReference type="InterPro" id="IPR028909">
    <property type="entry name" value="bL21-like"/>
</dbReference>
<dbReference type="InterPro" id="IPR036164">
    <property type="entry name" value="bL21-like_sf"/>
</dbReference>
<dbReference type="InterPro" id="IPR001787">
    <property type="entry name" value="Ribosomal_bL21"/>
</dbReference>
<dbReference type="InterPro" id="IPR018258">
    <property type="entry name" value="Ribosomal_bL21_CS"/>
</dbReference>
<dbReference type="NCBIfam" id="TIGR00061">
    <property type="entry name" value="L21"/>
    <property type="match status" value="1"/>
</dbReference>
<dbReference type="PANTHER" id="PTHR21349">
    <property type="entry name" value="50S RIBOSOMAL PROTEIN L21"/>
    <property type="match status" value="1"/>
</dbReference>
<dbReference type="PANTHER" id="PTHR21349:SF0">
    <property type="entry name" value="LARGE RIBOSOMAL SUBUNIT PROTEIN BL21M"/>
    <property type="match status" value="1"/>
</dbReference>
<dbReference type="Pfam" id="PF00829">
    <property type="entry name" value="Ribosomal_L21p"/>
    <property type="match status" value="1"/>
</dbReference>
<dbReference type="SUPFAM" id="SSF141091">
    <property type="entry name" value="L21p-like"/>
    <property type="match status" value="1"/>
</dbReference>
<dbReference type="PROSITE" id="PS01169">
    <property type="entry name" value="RIBOSOMAL_L21"/>
    <property type="match status" value="1"/>
</dbReference>
<gene>
    <name evidence="1" type="primary">rplU</name>
    <name type="ordered locus">MGAS10270_Spy0689</name>
</gene>
<accession>Q1JHI2</accession>
<protein>
    <recommendedName>
        <fullName evidence="1">Large ribosomal subunit protein bL21</fullName>
    </recommendedName>
    <alternativeName>
        <fullName evidence="2">50S ribosomal protein L21</fullName>
    </alternativeName>
</protein>
<organism>
    <name type="scientific">Streptococcus pyogenes serotype M2 (strain MGAS10270)</name>
    <dbReference type="NCBI Taxonomy" id="370552"/>
    <lineage>
        <taxon>Bacteria</taxon>
        <taxon>Bacillati</taxon>
        <taxon>Bacillota</taxon>
        <taxon>Bacilli</taxon>
        <taxon>Lactobacillales</taxon>
        <taxon>Streptococcaceae</taxon>
        <taxon>Streptococcus</taxon>
    </lineage>
</organism>
<reference key="1">
    <citation type="journal article" date="2006" name="Proc. Natl. Acad. Sci. U.S.A.">
        <title>Molecular genetic anatomy of inter- and intraserotype variation in the human bacterial pathogen group A Streptococcus.</title>
        <authorList>
            <person name="Beres S.B."/>
            <person name="Richter E.W."/>
            <person name="Nagiec M.J."/>
            <person name="Sumby P."/>
            <person name="Porcella S.F."/>
            <person name="DeLeo F.R."/>
            <person name="Musser J.M."/>
        </authorList>
    </citation>
    <scope>NUCLEOTIDE SEQUENCE [LARGE SCALE GENOMIC DNA]</scope>
    <source>
        <strain>MGAS10270</strain>
    </source>
</reference>
<evidence type="ECO:0000255" key="1">
    <source>
        <dbReference type="HAMAP-Rule" id="MF_01363"/>
    </source>
</evidence>
<evidence type="ECO:0000305" key="2"/>
<name>RL21_STRPD</name>